<protein>
    <recommendedName>
        <fullName evidence="6">Small ribosomal subunit protein uS4m</fullName>
    </recommendedName>
    <alternativeName>
        <fullName>Ribosomal protein S4, mitochondrial</fullName>
    </alternativeName>
</protein>
<sequence length="362" mass="43352">MWLLKKLIQRDIDLSPLRFQTCRLLLGNVWNRELTIIQRRILRRLRNRKRSIKKRKIYSKKYLTSYIQLQTTRKLSLFYGDLPITEMHRGTKRTSYIPFLLNLETRFDVILLRLHFLETIPQARQLISHRRVCVNKGMVSITHFKLSHGDIISFQENNAIIRGEEIRRSFYKEILVEKIIGKLLHQPLRMWRRSKTEWFHLLKTKRGCRLLLKSRFLQQLRSSMQEEDLERTKKFGSEKVCLGSSFAEHKRMKRNLLKSLFLSKRRKDKNLNLPTRTISPIVYNSSLSLYSNSTYCFASPHKLTMKRRIKRIELPTHYLEVNYRTPKAVVFYGPNIGHIPHDIRLKDLNLLLWSRNGRGQNI</sequence>
<proteinExistence type="evidence at protein level"/>
<geneLocation type="mitochondrion"/>
<organism>
    <name type="scientific">Arabidopsis thaliana</name>
    <name type="common">Mouse-ear cress</name>
    <dbReference type="NCBI Taxonomy" id="3702"/>
    <lineage>
        <taxon>Eukaryota</taxon>
        <taxon>Viridiplantae</taxon>
        <taxon>Streptophyta</taxon>
        <taxon>Embryophyta</taxon>
        <taxon>Tracheophyta</taxon>
        <taxon>Spermatophyta</taxon>
        <taxon>Magnoliopsida</taxon>
        <taxon>eudicotyledons</taxon>
        <taxon>Gunneridae</taxon>
        <taxon>Pentapetalae</taxon>
        <taxon>rosids</taxon>
        <taxon>malvids</taxon>
        <taxon>Brassicales</taxon>
        <taxon>Brassicaceae</taxon>
        <taxon>Camelineae</taxon>
        <taxon>Arabidopsis</taxon>
    </lineage>
</organism>
<comment type="subunit">
    <text evidence="7">Component of the mitochondrial ribosome small subunit.</text>
</comment>
<comment type="subcellular location">
    <subcellularLocation>
        <location>Mitochondrion</location>
    </subcellularLocation>
</comment>
<comment type="RNA editing">
    <location>
        <position position="26" evidence="4"/>
    </location>
    <location>
        <position position="30" evidence="2 3 4 5"/>
    </location>
    <location>
        <position position="59" evidence="4"/>
    </location>
    <location>
        <position position="77" evidence="2 3 4 5"/>
    </location>
    <location>
        <position position="79" evidence="2 3 4 5"/>
    </location>
    <location>
        <position position="100" evidence="2 3 4 5"/>
    </location>
    <location>
        <position position="103" evidence="2 3 4 5"/>
    </location>
    <location>
        <position position="111" evidence="4"/>
    </location>
    <location>
        <position position="115" evidence="2 3 5"/>
    </location>
    <location>
        <position position="126" evidence="2 3 4 5"/>
    </location>
    <location>
        <position position="175" evidence="2 3 4 5"/>
    </location>
    <location>
        <position position="319" evidence="2 3 4 5"/>
    </location>
    <location>
        <position position="323" evidence="2 3 4 5"/>
    </location>
    <location>
        <position position="331" evidence="2 3 4 5"/>
    </location>
    <location>
        <position position="348" evidence="2 3 4 5"/>
    </location>
    <location>
        <position position="351" evidence="2 3 4 5"/>
    </location>
    <location>
        <position position="353" evidence="2 3 4 5"/>
    </location>
</comment>
<comment type="miscellaneous">
    <text>A stretch of 270 kb of the mitochondrial genome is duplicated within the centromere of chromosome 2 resulting in the duplication of the gene. The expression of this duplicated gene (At2g07734) is not demonstrated. It is also probably not RNA edited and therefore differs in all the positions known to be edited.</text>
</comment>
<comment type="similarity">
    <text evidence="7">Belongs to the universal ribosomal protein uS4 family.</text>
</comment>
<gene>
    <name type="primary">RPS4</name>
    <name evidence="9" type="ordered locus">AtMg00290</name>
</gene>
<gene>
    <name evidence="8" type="ordered locus">At2g07734</name>
</gene>
<name>RT04_ARATH</name>
<accession>Q31708</accession>
<accession>A0A2P2CLF7</accession>
<accession>A7KNK1</accession>
<accession>B5TM97</accession>
<accession>F4INE3</accession>
<accession>O03980</accession>
<accession>Q8S8J0</accession>
<dbReference type="EMBL" id="EU999008">
    <property type="protein sequence ID" value="ACH78250.1"/>
    <property type="molecule type" value="mRNA"/>
</dbReference>
<dbReference type="EMBL" id="X96535">
    <property type="protein sequence ID" value="CAA65380.1"/>
    <property type="status" value="ALT_SEQ"/>
    <property type="molecule type" value="Genomic_DNA"/>
</dbReference>
<dbReference type="EMBL" id="Y08501">
    <property type="protein sequence ID" value="CAA69772.3"/>
    <property type="status" value="ALT_SEQ"/>
    <property type="molecule type" value="Genomic_DNA"/>
</dbReference>
<dbReference type="EMBL" id="JF729200">
    <property type="protein sequence ID" value="AEK01253.1"/>
    <property type="status" value="ALT_SEQ"/>
    <property type="molecule type" value="Genomic_DNA"/>
</dbReference>
<dbReference type="EMBL" id="JF729201">
    <property type="protein sequence ID" value="AEK01283.1"/>
    <property type="status" value="ALT_SEQ"/>
    <property type="molecule type" value="Genomic_DNA"/>
</dbReference>
<dbReference type="EMBL" id="JF729202">
    <property type="protein sequence ID" value="AEK01333.1"/>
    <property type="status" value="ALT_SEQ"/>
    <property type="molecule type" value="Genomic_DNA"/>
</dbReference>
<dbReference type="EMBL" id="BK010421">
    <property type="protein sequence ID" value="DAB41504.2"/>
    <property type="molecule type" value="Genomic_DNA"/>
</dbReference>
<dbReference type="EMBL" id="AC006225">
    <property type="protein sequence ID" value="AAM15172.1"/>
    <property type="status" value="ALT_SEQ"/>
    <property type="molecule type" value="Genomic_DNA"/>
</dbReference>
<dbReference type="EMBL" id="CP002685">
    <property type="protein sequence ID" value="AEC06112.1"/>
    <property type="status" value="ALT_SEQ"/>
    <property type="molecule type" value="Genomic_DNA"/>
</dbReference>
<dbReference type="EMBL" id="EF488944">
    <property type="protein sequence ID" value="ABS50656.1"/>
    <property type="molecule type" value="mRNA"/>
</dbReference>
<dbReference type="EMBL" id="EF488945">
    <property type="protein sequence ID" value="ABS50657.1"/>
    <property type="molecule type" value="mRNA"/>
</dbReference>
<dbReference type="PIR" id="S71904">
    <property type="entry name" value="S71904"/>
</dbReference>
<dbReference type="RefSeq" id="NP_085497.1">
    <property type="nucleotide sequence ID" value="NC_001284.2"/>
</dbReference>
<dbReference type="RefSeq" id="NP_178806.1">
    <property type="nucleotide sequence ID" value="NM_126764.2"/>
</dbReference>
<dbReference type="PDB" id="6XYW">
    <property type="method" value="EM"/>
    <property type="resolution" value="3.86 A"/>
    <property type="chains" value="Bc=1-362"/>
</dbReference>
<dbReference type="PDBsum" id="6XYW"/>
<dbReference type="EMDB" id="EMD-10654"/>
<dbReference type="SMR" id="Q31708"/>
<dbReference type="BioGRID" id="14">
    <property type="interactions" value="1"/>
</dbReference>
<dbReference type="BioGRID" id="795">
    <property type="interactions" value="1"/>
</dbReference>
<dbReference type="FunCoup" id="Q31708">
    <property type="interactions" value="65"/>
</dbReference>
<dbReference type="IntAct" id="Q31708">
    <property type="interactions" value="2"/>
</dbReference>
<dbReference type="STRING" id="3702.Q31708"/>
<dbReference type="PaxDb" id="3702-AT2G07734.1"/>
<dbReference type="PeptideAtlas" id="Q31708"/>
<dbReference type="ProteomicsDB" id="183625"/>
<dbReference type="GeneID" id="815406"/>
<dbReference type="KEGG" id="ath:AT2G07734"/>
<dbReference type="Araport" id="AT2G07734"/>
<dbReference type="Araport" id="ATMG00290"/>
<dbReference type="TAIR" id="AT2G07734"/>
<dbReference type="TAIR" id="ATMG00290">
    <property type="gene designation" value="RPS4"/>
</dbReference>
<dbReference type="eggNOG" id="ENOG502QVNI">
    <property type="taxonomic scope" value="Eukaryota"/>
</dbReference>
<dbReference type="HOGENOM" id="CLU_071763_0_0_1"/>
<dbReference type="InParanoid" id="Q31708"/>
<dbReference type="OrthoDB" id="1686273at2759"/>
<dbReference type="PRO" id="PR:Q31708"/>
<dbReference type="Proteomes" id="UP000006548">
    <property type="component" value="Chromosome 2"/>
</dbReference>
<dbReference type="Proteomes" id="UP000006548">
    <property type="component" value="Mitochondrion MT"/>
</dbReference>
<dbReference type="ExpressionAtlas" id="Q31708">
    <property type="expression patterns" value="baseline and differential"/>
</dbReference>
<dbReference type="GO" id="GO:0005739">
    <property type="term" value="C:mitochondrion"/>
    <property type="evidence" value="ECO:0007669"/>
    <property type="project" value="UniProtKB-SubCell"/>
</dbReference>
<dbReference type="GO" id="GO:0015935">
    <property type="term" value="C:small ribosomal subunit"/>
    <property type="evidence" value="ECO:0000318"/>
    <property type="project" value="GO_Central"/>
</dbReference>
<dbReference type="GO" id="GO:0019843">
    <property type="term" value="F:rRNA binding"/>
    <property type="evidence" value="ECO:0000318"/>
    <property type="project" value="GO_Central"/>
</dbReference>
<dbReference type="GO" id="GO:0003735">
    <property type="term" value="F:structural constituent of ribosome"/>
    <property type="evidence" value="ECO:0000318"/>
    <property type="project" value="GO_Central"/>
</dbReference>
<dbReference type="GO" id="GO:0042274">
    <property type="term" value="P:ribosomal small subunit biogenesis"/>
    <property type="evidence" value="ECO:0000318"/>
    <property type="project" value="GO_Central"/>
</dbReference>
<dbReference type="CDD" id="cd00165">
    <property type="entry name" value="S4"/>
    <property type="match status" value="1"/>
</dbReference>
<dbReference type="Gene3D" id="3.10.290.10">
    <property type="entry name" value="RNA-binding S4 domain"/>
    <property type="match status" value="1"/>
</dbReference>
<dbReference type="InterPro" id="IPR022801">
    <property type="entry name" value="Ribosomal_uS4"/>
</dbReference>
<dbReference type="InterPro" id="IPR002942">
    <property type="entry name" value="S4_RNA-bd"/>
</dbReference>
<dbReference type="InterPro" id="IPR036986">
    <property type="entry name" value="S4_RNA-bd_sf"/>
</dbReference>
<dbReference type="PANTHER" id="PTHR11831">
    <property type="entry name" value="30S 40S RIBOSOMAL PROTEIN"/>
    <property type="match status" value="1"/>
</dbReference>
<dbReference type="PANTHER" id="PTHR11831:SF30">
    <property type="entry name" value="SMALL RIBOSOMAL SUBUNIT PROTEIN US4M"/>
    <property type="match status" value="1"/>
</dbReference>
<dbReference type="Pfam" id="PF01479">
    <property type="entry name" value="S4"/>
    <property type="match status" value="1"/>
</dbReference>
<dbReference type="SMART" id="SM00363">
    <property type="entry name" value="S4"/>
    <property type="match status" value="1"/>
</dbReference>
<dbReference type="SUPFAM" id="SSF55174">
    <property type="entry name" value="Alpha-L RNA-binding motif"/>
    <property type="match status" value="1"/>
</dbReference>
<dbReference type="PROSITE" id="PS50889">
    <property type="entry name" value="S4"/>
    <property type="match status" value="1"/>
</dbReference>
<keyword id="KW-0002">3D-structure</keyword>
<keyword id="KW-0496">Mitochondrion</keyword>
<keyword id="KW-1185">Reference proteome</keyword>
<keyword id="KW-0687">Ribonucleoprotein</keyword>
<keyword id="KW-0689">Ribosomal protein</keyword>
<keyword id="KW-0691">RNA editing</keyword>
<keyword id="KW-0694">RNA-binding</keyword>
<keyword id="KW-0699">rRNA-binding</keyword>
<evidence type="ECO:0000255" key="1">
    <source>
        <dbReference type="PROSITE-ProRule" id="PRU00182"/>
    </source>
</evidence>
<evidence type="ECO:0000269" key="2">
    <source>
    </source>
</evidence>
<evidence type="ECO:0000269" key="3">
    <source>
    </source>
</evidence>
<evidence type="ECO:0000269" key="4">
    <source>
    </source>
</evidence>
<evidence type="ECO:0000269" key="5">
    <source>
    </source>
</evidence>
<evidence type="ECO:0000303" key="6">
    <source>
    </source>
</evidence>
<evidence type="ECO:0000305" key="7"/>
<evidence type="ECO:0000312" key="8">
    <source>
        <dbReference type="Araport" id="AT2G07734"/>
    </source>
</evidence>
<evidence type="ECO:0000312" key="9">
    <source>
        <dbReference type="Araport" id="ATMG00290"/>
    </source>
</evidence>
<feature type="chain" id="PRO_0000132684" description="Small ribosomal subunit protein uS4m">
    <location>
        <begin position="1"/>
        <end position="362"/>
    </location>
</feature>
<feature type="domain" description="S4 RNA-binding" evidence="1">
    <location>
        <begin position="105"/>
        <end position="179"/>
    </location>
</feature>
<reference key="1">
    <citation type="journal article" date="2008" name="Mitochondrion">
        <title>Seven large variations in the extent of RNA editing in plant mitochondria between three ecotypes of Arabidopsis thaliana.</title>
        <authorList>
            <person name="Zehrmann A."/>
            <person name="van der Merwe J.A."/>
            <person name="Verbitskiy D."/>
            <person name="Brennicke A."/>
            <person name="Takenaka M."/>
        </authorList>
    </citation>
    <scope>NUCLEOTIDE SEQUENCE [MRNA]</scope>
    <source>
        <strain>cv. Columbia</strain>
    </source>
</reference>
<reference key="2">
    <citation type="journal article" date="1996" name="Biol. Chem. Hoppe-Seyler">
        <title>The rps4-gene is encoded upstream of the nad2-gene in Arabidopsis mitochondria.</title>
        <authorList>
            <person name="Lippok B."/>
            <person name="Brennicke A."/>
            <person name="Unseld M."/>
        </authorList>
    </citation>
    <scope>NUCLEOTIDE SEQUENCE [GENOMIC DNA]</scope>
    <scope>RNA EDITING</scope>
    <source>
        <strain>cv. Columbia</strain>
    </source>
</reference>
<reference key="3">
    <citation type="journal article" date="1997" name="Nat. Genet.">
        <title>The mitochondrial genome of Arabidopsis thaliana contains 57 genes in 366,924 nucleotides.</title>
        <authorList>
            <person name="Unseld M."/>
            <person name="Marienfeld J.R."/>
            <person name="Brandt P."/>
            <person name="Brennicke A."/>
        </authorList>
    </citation>
    <scope>NUCLEOTIDE SEQUENCE [LARGE SCALE GENOMIC DNA]</scope>
    <source>
        <strain>cv. C24</strain>
    </source>
</reference>
<reference key="4">
    <citation type="journal article" date="1999" name="Proc. Natl. Acad. Sci. U.S.A.">
        <title>RNA editing in Arabidopsis mitochondria effects 441 C to U changes in ORFs.</title>
        <authorList>
            <person name="Giege P."/>
            <person name="Brennicke A."/>
        </authorList>
    </citation>
    <scope>NUCLEOTIDE SEQUENCE [GENOMIC DNA]</scope>
    <scope>RNA EDITING</scope>
</reference>
<reference key="5">
    <citation type="journal article" date="2011" name="BMC Biol.">
        <title>Double-strand break repair processes drive evolution of the mitochondrial genome in Arabidopsis.</title>
        <authorList>
            <person name="Davila J.I."/>
            <person name="Arrieta-Montiel M.P."/>
            <person name="Wamboldt Y."/>
            <person name="Cao J."/>
            <person name="Hagmann J."/>
            <person name="Shedge V."/>
            <person name="Xu Y.Z."/>
            <person name="Weigel D."/>
            <person name="Mackenzie S.A."/>
        </authorList>
    </citation>
    <scope>NUCLEOTIDE SEQUENCE [LARGE SCALE GENOMIC DNA]</scope>
    <source>
        <strain>cv. C24</strain>
        <strain>cv. Columbia</strain>
        <strain>cv. Landsberg erecta</strain>
    </source>
</reference>
<reference key="6">
    <citation type="journal article" date="2018" name="Plant Cell">
        <title>Correction of persistent errors in Arabidopsis reference mitochondrial genomes.</title>
        <authorList>
            <person name="Sloan D.B."/>
            <person name="Wu Z."/>
            <person name="Sharbrough J."/>
        </authorList>
    </citation>
    <scope>NUCLEOTIDE SEQUENCE [LARGE SCALE GENOMIC DNA]</scope>
    <scope>RNA EDITING</scope>
    <source>
        <strain>cv. Columbia</strain>
    </source>
</reference>
<reference key="7">
    <citation type="journal article" date="1999" name="Nature">
        <title>Sequence and analysis of chromosome 2 of the plant Arabidopsis thaliana.</title>
        <authorList>
            <person name="Lin X."/>
            <person name="Kaul S."/>
            <person name="Rounsley S.D."/>
            <person name="Shea T.P."/>
            <person name="Benito M.-I."/>
            <person name="Town C.D."/>
            <person name="Fujii C.Y."/>
            <person name="Mason T.M."/>
            <person name="Bowman C.L."/>
            <person name="Barnstead M.E."/>
            <person name="Feldblyum T.V."/>
            <person name="Buell C.R."/>
            <person name="Ketchum K.A."/>
            <person name="Lee J.J."/>
            <person name="Ronning C.M."/>
            <person name="Koo H.L."/>
            <person name="Moffat K.S."/>
            <person name="Cronin L.A."/>
            <person name="Shen M."/>
            <person name="Pai G."/>
            <person name="Van Aken S."/>
            <person name="Umayam L."/>
            <person name="Tallon L.J."/>
            <person name="Gill J.E."/>
            <person name="Adams M.D."/>
            <person name="Carrera A.J."/>
            <person name="Creasy T.H."/>
            <person name="Goodman H.M."/>
            <person name="Somerville C.R."/>
            <person name="Copenhaver G.P."/>
            <person name="Preuss D."/>
            <person name="Nierman W.C."/>
            <person name="White O."/>
            <person name="Eisen J.A."/>
            <person name="Salzberg S.L."/>
            <person name="Fraser C.M."/>
            <person name="Venter J.C."/>
        </authorList>
    </citation>
    <scope>NUCLEOTIDE SEQUENCE [LARGE SCALE GENOMIC DNA] (AT2G07734)</scope>
    <source>
        <strain>cv. Columbia</strain>
    </source>
</reference>
<reference key="8">
    <citation type="journal article" date="2017" name="Plant J.">
        <title>Araport11: a complete reannotation of the Arabidopsis thaliana reference genome.</title>
        <authorList>
            <person name="Cheng C.Y."/>
            <person name="Krishnakumar V."/>
            <person name="Chan A.P."/>
            <person name="Thibaud-Nissen F."/>
            <person name="Schobel S."/>
            <person name="Town C.D."/>
        </authorList>
    </citation>
    <scope>GENOME REANNOTATION (AT2G07734)</scope>
    <source>
        <strain>cv. Columbia</strain>
    </source>
</reference>
<reference key="9">
    <citation type="journal article" date="2008" name="Genetics">
        <title>Genetic architecture of mitochondrial editing in Arabidopsis thaliana.</title>
        <authorList>
            <person name="Bentolila S."/>
            <person name="Elliott L.E."/>
            <person name="Hanson M.R."/>
        </authorList>
    </citation>
    <scope>NUCLEOTIDE SEQUENCE [MRNA] OF 31-344</scope>
    <scope>RNA EDITING</scope>
    <source>
        <strain>cv. Columbia</strain>
        <strain>cv. Landsberg erecta</strain>
        <tissue>Rosette leaf</tissue>
    </source>
</reference>
<reference key="10">
    <citation type="journal article" date="2023" name="Plant Cell">
        <title>An updated nomenclature for plant ribosomal protein genes.</title>
        <authorList>
            <person name="Scarpin M.R."/>
            <person name="Busche M."/>
            <person name="Martinez R.E."/>
            <person name="Harper L.C."/>
            <person name="Reiser L."/>
            <person name="Szakonyi D."/>
            <person name="Merchante C."/>
            <person name="Lan T."/>
            <person name="Xiong W."/>
            <person name="Mo B."/>
            <person name="Tang G."/>
            <person name="Chen X."/>
            <person name="Bailey-Serres J."/>
            <person name="Browning K.S."/>
            <person name="Brunkard J.O."/>
        </authorList>
    </citation>
    <scope>NOMENCLATURE</scope>
</reference>